<sequence length="757" mass="88098">MTIFNHTLGFPRIGLNRELKKAQEDYWSGNLLYEDFLCVGSQLRRENWKKQKDAGIDYIPVGDFAWYDHVLSTSMMLGNIPERHLNVNDNKIDLDCLFRIARGCSPDVAASEMTKWFNTNYHYIVPEFNKNRILKFSWKQILEETDEALLLGYKVKPIILGPITYLWLGKIKGEYFDRLDLLKNILPIYKQVLRELSQRNIDFVQIDEPALVLDLPEKWKKAYSYAYEYLNGTTKILLTTYFDSIEHNIEYIRDLPIYGIHIDLVFGKYNLFDFNSKLPKEWILSLGVINGRNVWRADLIKLFKSISTILKFRKKLLIGSSCSLLHSPIDLQKEKNLDKESKKWFSFAVQKCTELSLLSKALNKNDTDSIQKWCSSIYERNFSKRVQKIEVQNRLSEILNVNFKRSDSYNIRSREQKKKFNLPILPTTTIGSFPQTLQIRKLRRDYKQGLINDVDYEIGIKKHIKEVIKEQEKLGIDVLVHGEPERNDMVEYFGENLDGFIFTDNGWVQSYGSRCVKPPIIIGDVSRLKPITVKWSKYAQSLTDKPVKAMLTGPVTILFWSFPREDISLEKIAKQIGLALRDEVLDLEKEKIEIIQIDEPALREGLPLRKSLWNEYLSWAVDAFRLSSSGVKNTTQIHTHMCYCEFHDIMHAISFLDADVITIETARSDMELLKSFKTFKYPNEIGPGVYDIHSSNIPSITSIKFLLNKAIAYIPVERIWVNPDCGLKTRNWNETILALKNMVCAAKEMRDKIKKIT</sequence>
<dbReference type="EC" id="2.1.1.14" evidence="1"/>
<dbReference type="EMBL" id="AE013218">
    <property type="protein sequence ID" value="AAM67602.1"/>
    <property type="molecule type" value="Genomic_DNA"/>
</dbReference>
<dbReference type="RefSeq" id="WP_011053568.1">
    <property type="nucleotide sequence ID" value="NC_004061.1"/>
</dbReference>
<dbReference type="SMR" id="Q8KA71"/>
<dbReference type="STRING" id="198804.BUsg_031"/>
<dbReference type="GeneID" id="93003494"/>
<dbReference type="KEGG" id="bas:BUsg_031"/>
<dbReference type="eggNOG" id="COG0620">
    <property type="taxonomic scope" value="Bacteria"/>
</dbReference>
<dbReference type="HOGENOM" id="CLU_013175_0_0_6"/>
<dbReference type="UniPathway" id="UPA00051">
    <property type="reaction ID" value="UER00082"/>
</dbReference>
<dbReference type="Proteomes" id="UP000000416">
    <property type="component" value="Chromosome"/>
</dbReference>
<dbReference type="GO" id="GO:0003871">
    <property type="term" value="F:5-methyltetrahydropteroyltriglutamate-homocysteine S-methyltransferase activity"/>
    <property type="evidence" value="ECO:0007669"/>
    <property type="project" value="UniProtKB-UniRule"/>
</dbReference>
<dbReference type="GO" id="GO:0008270">
    <property type="term" value="F:zinc ion binding"/>
    <property type="evidence" value="ECO:0007669"/>
    <property type="project" value="InterPro"/>
</dbReference>
<dbReference type="GO" id="GO:0009086">
    <property type="term" value="P:methionine biosynthetic process"/>
    <property type="evidence" value="ECO:0007669"/>
    <property type="project" value="UniProtKB-UniRule"/>
</dbReference>
<dbReference type="GO" id="GO:0032259">
    <property type="term" value="P:methylation"/>
    <property type="evidence" value="ECO:0007669"/>
    <property type="project" value="UniProtKB-KW"/>
</dbReference>
<dbReference type="CDD" id="cd03311">
    <property type="entry name" value="CIMS_C_terminal_like"/>
    <property type="match status" value="1"/>
</dbReference>
<dbReference type="CDD" id="cd03312">
    <property type="entry name" value="CIMS_N_terminal_like"/>
    <property type="match status" value="1"/>
</dbReference>
<dbReference type="FunFam" id="3.20.20.210:FF:000002">
    <property type="entry name" value="5-methyltetrahydropteroyltriglutamate--homocysteine methyltransferase"/>
    <property type="match status" value="1"/>
</dbReference>
<dbReference type="Gene3D" id="3.20.20.210">
    <property type="match status" value="2"/>
</dbReference>
<dbReference type="HAMAP" id="MF_00172">
    <property type="entry name" value="Meth_synth"/>
    <property type="match status" value="1"/>
</dbReference>
<dbReference type="InterPro" id="IPR013215">
    <property type="entry name" value="Cbl-indep_Met_Synth_N"/>
</dbReference>
<dbReference type="InterPro" id="IPR006276">
    <property type="entry name" value="Cobalamin-indep_Met_synthase"/>
</dbReference>
<dbReference type="InterPro" id="IPR002629">
    <property type="entry name" value="Met_Synth_C/arc"/>
</dbReference>
<dbReference type="InterPro" id="IPR038071">
    <property type="entry name" value="UROD/MetE-like_sf"/>
</dbReference>
<dbReference type="NCBIfam" id="TIGR01371">
    <property type="entry name" value="met_syn_B12ind"/>
    <property type="match status" value="1"/>
</dbReference>
<dbReference type="NCBIfam" id="NF003556">
    <property type="entry name" value="PRK05222.1"/>
    <property type="match status" value="1"/>
</dbReference>
<dbReference type="PANTHER" id="PTHR30519">
    <property type="entry name" value="5-METHYLTETRAHYDROPTEROYLTRIGLUTAMATE--HOMOCYSTEINE METHYLTRANSFERASE"/>
    <property type="match status" value="1"/>
</dbReference>
<dbReference type="Pfam" id="PF08267">
    <property type="entry name" value="Meth_synt_1"/>
    <property type="match status" value="1"/>
</dbReference>
<dbReference type="Pfam" id="PF01717">
    <property type="entry name" value="Meth_synt_2"/>
    <property type="match status" value="1"/>
</dbReference>
<dbReference type="PIRSF" id="PIRSF000382">
    <property type="entry name" value="MeTrfase_B12_ind"/>
    <property type="match status" value="1"/>
</dbReference>
<dbReference type="SUPFAM" id="SSF51726">
    <property type="entry name" value="UROD/MetE-like"/>
    <property type="match status" value="2"/>
</dbReference>
<feature type="chain" id="PRO_0000098620" description="5-methyltetrahydropteroyltriglutamate--homocysteine methyltransferase">
    <location>
        <begin position="1"/>
        <end position="757"/>
    </location>
</feature>
<feature type="active site" description="Proton donor" evidence="1">
    <location>
        <position position="693"/>
    </location>
</feature>
<feature type="binding site" evidence="1">
    <location>
        <begin position="17"/>
        <end position="20"/>
    </location>
    <ligand>
        <name>5-methyltetrahydropteroyltri-L-glutamate</name>
        <dbReference type="ChEBI" id="CHEBI:58207"/>
    </ligand>
</feature>
<feature type="binding site" evidence="1">
    <location>
        <position position="115"/>
    </location>
    <ligand>
        <name>5-methyltetrahydropteroyltri-L-glutamate</name>
        <dbReference type="ChEBI" id="CHEBI:58207"/>
    </ligand>
</feature>
<feature type="binding site" evidence="1">
    <location>
        <begin position="430"/>
        <end position="432"/>
    </location>
    <ligand>
        <name>L-homocysteine</name>
        <dbReference type="ChEBI" id="CHEBI:58199"/>
    </ligand>
</feature>
<feature type="binding site" evidence="1">
    <location>
        <begin position="430"/>
        <end position="432"/>
    </location>
    <ligand>
        <name>L-methionine</name>
        <dbReference type="ChEBI" id="CHEBI:57844"/>
    </ligand>
</feature>
<feature type="binding site" evidence="1">
    <location>
        <position position="483"/>
    </location>
    <ligand>
        <name>L-homocysteine</name>
        <dbReference type="ChEBI" id="CHEBI:58199"/>
    </ligand>
</feature>
<feature type="binding site" evidence="1">
    <location>
        <position position="483"/>
    </location>
    <ligand>
        <name>L-methionine</name>
        <dbReference type="ChEBI" id="CHEBI:57844"/>
    </ligand>
</feature>
<feature type="binding site" evidence="1">
    <location>
        <begin position="514"/>
        <end position="515"/>
    </location>
    <ligand>
        <name>5-methyltetrahydropteroyltri-L-glutamate</name>
        <dbReference type="ChEBI" id="CHEBI:58207"/>
    </ligand>
</feature>
<feature type="binding site" evidence="1">
    <location>
        <position position="560"/>
    </location>
    <ligand>
        <name>5-methyltetrahydropteroyltri-L-glutamate</name>
        <dbReference type="ChEBI" id="CHEBI:58207"/>
    </ligand>
</feature>
<feature type="binding site" evidence="1">
    <location>
        <position position="598"/>
    </location>
    <ligand>
        <name>L-homocysteine</name>
        <dbReference type="ChEBI" id="CHEBI:58199"/>
    </ligand>
</feature>
<feature type="binding site" evidence="1">
    <location>
        <position position="598"/>
    </location>
    <ligand>
        <name>L-methionine</name>
        <dbReference type="ChEBI" id="CHEBI:57844"/>
    </ligand>
</feature>
<feature type="binding site" evidence="1">
    <location>
        <position position="604"/>
    </location>
    <ligand>
        <name>5-methyltetrahydropteroyltri-L-glutamate</name>
        <dbReference type="ChEBI" id="CHEBI:58207"/>
    </ligand>
</feature>
<feature type="binding site" evidence="1">
    <location>
        <position position="640"/>
    </location>
    <ligand>
        <name>Zn(2+)</name>
        <dbReference type="ChEBI" id="CHEBI:29105"/>
        <note>catalytic</note>
    </ligand>
</feature>
<feature type="binding site" evidence="1">
    <location>
        <position position="642"/>
    </location>
    <ligand>
        <name>Zn(2+)</name>
        <dbReference type="ChEBI" id="CHEBI:29105"/>
        <note>catalytic</note>
    </ligand>
</feature>
<feature type="binding site" evidence="1">
    <location>
        <position position="664"/>
    </location>
    <ligand>
        <name>Zn(2+)</name>
        <dbReference type="ChEBI" id="CHEBI:29105"/>
        <note>catalytic</note>
    </ligand>
</feature>
<feature type="binding site" evidence="1">
    <location>
        <position position="725"/>
    </location>
    <ligand>
        <name>Zn(2+)</name>
        <dbReference type="ChEBI" id="CHEBI:29105"/>
        <note>catalytic</note>
    </ligand>
</feature>
<protein>
    <recommendedName>
        <fullName evidence="1">5-methyltetrahydropteroyltriglutamate--homocysteine methyltransferase</fullName>
        <ecNumber evidence="1">2.1.1.14</ecNumber>
    </recommendedName>
    <alternativeName>
        <fullName evidence="1">Cobalamin-independent methionine synthase</fullName>
    </alternativeName>
    <alternativeName>
        <fullName evidence="1">Methionine synthase, vitamin-B12 independent isozyme</fullName>
    </alternativeName>
</protein>
<keyword id="KW-0028">Amino-acid biosynthesis</keyword>
<keyword id="KW-0479">Metal-binding</keyword>
<keyword id="KW-0486">Methionine biosynthesis</keyword>
<keyword id="KW-0489">Methyltransferase</keyword>
<keyword id="KW-0677">Repeat</keyword>
<keyword id="KW-0808">Transferase</keyword>
<keyword id="KW-0862">Zinc</keyword>
<evidence type="ECO:0000255" key="1">
    <source>
        <dbReference type="HAMAP-Rule" id="MF_00172"/>
    </source>
</evidence>
<comment type="function">
    <text evidence="1">Catalyzes the transfer of a methyl group from 5-methyltetrahydrofolate to homocysteine resulting in methionine formation.</text>
</comment>
<comment type="catalytic activity">
    <reaction evidence="1">
        <text>5-methyltetrahydropteroyltri-L-glutamate + L-homocysteine = tetrahydropteroyltri-L-glutamate + L-methionine</text>
        <dbReference type="Rhea" id="RHEA:21196"/>
        <dbReference type="ChEBI" id="CHEBI:57844"/>
        <dbReference type="ChEBI" id="CHEBI:58140"/>
        <dbReference type="ChEBI" id="CHEBI:58199"/>
        <dbReference type="ChEBI" id="CHEBI:58207"/>
        <dbReference type="EC" id="2.1.1.14"/>
    </reaction>
</comment>
<comment type="cofactor">
    <cofactor evidence="1">
        <name>Zn(2+)</name>
        <dbReference type="ChEBI" id="CHEBI:29105"/>
    </cofactor>
    <text evidence="1">Binds 1 zinc ion per subunit.</text>
</comment>
<comment type="pathway">
    <text evidence="1">Amino-acid biosynthesis; L-methionine biosynthesis via de novo pathway; L-methionine from L-homocysteine (MetE route): step 1/1.</text>
</comment>
<comment type="similarity">
    <text evidence="1">Belongs to the vitamin-B12 independent methionine synthase family.</text>
</comment>
<gene>
    <name evidence="1" type="primary">metE</name>
    <name type="ordered locus">BUsg_031</name>
</gene>
<proteinExistence type="inferred from homology"/>
<reference key="1">
    <citation type="journal article" date="2002" name="Science">
        <title>50 million years of genomic stasis in endosymbiotic bacteria.</title>
        <authorList>
            <person name="Tamas I."/>
            <person name="Klasson L."/>
            <person name="Canbaeck B."/>
            <person name="Naeslund A.K."/>
            <person name="Eriksson A.-S."/>
            <person name="Wernegreen J.J."/>
            <person name="Sandstroem J.P."/>
            <person name="Moran N.A."/>
            <person name="Andersson S.G.E."/>
        </authorList>
    </citation>
    <scope>NUCLEOTIDE SEQUENCE [LARGE SCALE GENOMIC DNA]</scope>
    <source>
        <strain>Sg</strain>
    </source>
</reference>
<accession>Q8KA71</accession>
<name>METE_BUCAP</name>
<organism>
    <name type="scientific">Buchnera aphidicola subsp. Schizaphis graminum (strain Sg)</name>
    <dbReference type="NCBI Taxonomy" id="198804"/>
    <lineage>
        <taxon>Bacteria</taxon>
        <taxon>Pseudomonadati</taxon>
        <taxon>Pseudomonadota</taxon>
        <taxon>Gammaproteobacteria</taxon>
        <taxon>Enterobacterales</taxon>
        <taxon>Erwiniaceae</taxon>
        <taxon>Buchnera</taxon>
    </lineage>
</organism>